<evidence type="ECO:0000255" key="1">
    <source>
        <dbReference type="HAMAP-Rule" id="MF_00374"/>
    </source>
</evidence>
<evidence type="ECO:0000305" key="2"/>
<reference key="1">
    <citation type="submission" date="2007-03" db="EMBL/GenBank/DDBJ databases">
        <title>Genome sequence of Rhodospirillum centenum.</title>
        <authorList>
            <person name="Touchman J.W."/>
            <person name="Bauer C."/>
            <person name="Blankenship R.E."/>
        </authorList>
    </citation>
    <scope>NUCLEOTIDE SEQUENCE [LARGE SCALE GENOMIC DNA]</scope>
    <source>
        <strain>ATCC 51521 / SW</strain>
    </source>
</reference>
<keyword id="KW-1185">Reference proteome</keyword>
<keyword id="KW-0687">Ribonucleoprotein</keyword>
<keyword id="KW-0689">Ribosomal protein</keyword>
<gene>
    <name evidence="1" type="primary">rpmC</name>
    <name type="ordered locus">RC1_0719</name>
</gene>
<sequence length="69" mass="7984">MTKATDIRTKSADELNEQLLQLKKEQFNLRFQRASGQLENTARVREVRRDIARIKTILGERTRSAQPAS</sequence>
<accession>B6IRR4</accession>
<organism>
    <name type="scientific">Rhodospirillum centenum (strain ATCC 51521 / SW)</name>
    <dbReference type="NCBI Taxonomy" id="414684"/>
    <lineage>
        <taxon>Bacteria</taxon>
        <taxon>Pseudomonadati</taxon>
        <taxon>Pseudomonadota</taxon>
        <taxon>Alphaproteobacteria</taxon>
        <taxon>Rhodospirillales</taxon>
        <taxon>Rhodospirillaceae</taxon>
        <taxon>Rhodospirillum</taxon>
    </lineage>
</organism>
<name>RL29_RHOCS</name>
<comment type="similarity">
    <text evidence="1">Belongs to the universal ribosomal protein uL29 family.</text>
</comment>
<dbReference type="EMBL" id="CP000613">
    <property type="protein sequence ID" value="ACI98150.1"/>
    <property type="molecule type" value="Genomic_DNA"/>
</dbReference>
<dbReference type="RefSeq" id="WP_012565941.1">
    <property type="nucleotide sequence ID" value="NC_011420.2"/>
</dbReference>
<dbReference type="SMR" id="B6IRR4"/>
<dbReference type="STRING" id="414684.RC1_0719"/>
<dbReference type="KEGG" id="rce:RC1_0719"/>
<dbReference type="eggNOG" id="COG0255">
    <property type="taxonomic scope" value="Bacteria"/>
</dbReference>
<dbReference type="HOGENOM" id="CLU_158491_1_0_5"/>
<dbReference type="OrthoDB" id="9815192at2"/>
<dbReference type="Proteomes" id="UP000001591">
    <property type="component" value="Chromosome"/>
</dbReference>
<dbReference type="GO" id="GO:0022625">
    <property type="term" value="C:cytosolic large ribosomal subunit"/>
    <property type="evidence" value="ECO:0007669"/>
    <property type="project" value="TreeGrafter"/>
</dbReference>
<dbReference type="GO" id="GO:0003735">
    <property type="term" value="F:structural constituent of ribosome"/>
    <property type="evidence" value="ECO:0007669"/>
    <property type="project" value="InterPro"/>
</dbReference>
<dbReference type="GO" id="GO:0006412">
    <property type="term" value="P:translation"/>
    <property type="evidence" value="ECO:0007669"/>
    <property type="project" value="UniProtKB-UniRule"/>
</dbReference>
<dbReference type="CDD" id="cd00427">
    <property type="entry name" value="Ribosomal_L29_HIP"/>
    <property type="match status" value="1"/>
</dbReference>
<dbReference type="FunFam" id="1.10.287.310:FF:000001">
    <property type="entry name" value="50S ribosomal protein L29"/>
    <property type="match status" value="1"/>
</dbReference>
<dbReference type="Gene3D" id="1.10.287.310">
    <property type="match status" value="1"/>
</dbReference>
<dbReference type="HAMAP" id="MF_00374">
    <property type="entry name" value="Ribosomal_uL29"/>
    <property type="match status" value="1"/>
</dbReference>
<dbReference type="InterPro" id="IPR050063">
    <property type="entry name" value="Ribosomal_protein_uL29"/>
</dbReference>
<dbReference type="InterPro" id="IPR001854">
    <property type="entry name" value="Ribosomal_uL29"/>
</dbReference>
<dbReference type="InterPro" id="IPR018254">
    <property type="entry name" value="Ribosomal_uL29_CS"/>
</dbReference>
<dbReference type="InterPro" id="IPR036049">
    <property type="entry name" value="Ribosomal_uL29_sf"/>
</dbReference>
<dbReference type="NCBIfam" id="TIGR00012">
    <property type="entry name" value="L29"/>
    <property type="match status" value="1"/>
</dbReference>
<dbReference type="PANTHER" id="PTHR10916">
    <property type="entry name" value="60S RIBOSOMAL PROTEIN L35/50S RIBOSOMAL PROTEIN L29"/>
    <property type="match status" value="1"/>
</dbReference>
<dbReference type="PANTHER" id="PTHR10916:SF0">
    <property type="entry name" value="LARGE RIBOSOMAL SUBUNIT PROTEIN UL29C"/>
    <property type="match status" value="1"/>
</dbReference>
<dbReference type="Pfam" id="PF00831">
    <property type="entry name" value="Ribosomal_L29"/>
    <property type="match status" value="1"/>
</dbReference>
<dbReference type="SUPFAM" id="SSF46561">
    <property type="entry name" value="Ribosomal protein L29 (L29p)"/>
    <property type="match status" value="1"/>
</dbReference>
<dbReference type="PROSITE" id="PS00579">
    <property type="entry name" value="RIBOSOMAL_L29"/>
    <property type="match status" value="1"/>
</dbReference>
<protein>
    <recommendedName>
        <fullName evidence="1">Large ribosomal subunit protein uL29</fullName>
    </recommendedName>
    <alternativeName>
        <fullName evidence="2">50S ribosomal protein L29</fullName>
    </alternativeName>
</protein>
<proteinExistence type="inferred from homology"/>
<feature type="chain" id="PRO_1000121806" description="Large ribosomal subunit protein uL29">
    <location>
        <begin position="1"/>
        <end position="69"/>
    </location>
</feature>